<gene>
    <name type="primary">LOL2</name>
    <name type="ordered locus">At4g21610</name>
    <name type="ORF">F17L22.70</name>
    <name type="ORF">F18E5.230</name>
</gene>
<keyword id="KW-0007">Acetylation</keyword>
<keyword id="KW-0539">Nucleus</keyword>
<keyword id="KW-1185">Reference proteome</keyword>
<feature type="chain" id="PRO_0000408485" description="Protein LOL2">
    <location>
        <begin position="1"/>
        <end position="155"/>
    </location>
</feature>
<feature type="region of interest" description="Disordered" evidence="2">
    <location>
        <begin position="1"/>
        <end position="35"/>
    </location>
</feature>
<feature type="region of interest" description="Putative zinc finger 1">
    <location>
        <begin position="60"/>
        <end position="90"/>
    </location>
</feature>
<feature type="region of interest" description="Putative zinc finger 2">
    <location>
        <begin position="98"/>
        <end position="128"/>
    </location>
</feature>
<feature type="region of interest" description="Disordered" evidence="2">
    <location>
        <begin position="130"/>
        <end position="155"/>
    </location>
</feature>
<feature type="compositionally biased region" description="Polar residues" evidence="2">
    <location>
        <begin position="138"/>
        <end position="149"/>
    </location>
</feature>
<feature type="modified residue" description="N-acetylmethionine" evidence="4">
    <location>
        <position position="1"/>
    </location>
</feature>
<protein>
    <recommendedName>
        <fullName>Protein LOL2</fullName>
    </recommendedName>
    <alternativeName>
        <fullName>Protein LSD ONE LIKE 2</fullName>
        <shortName>AtLOL2</shortName>
    </alternativeName>
    <alternativeName>
        <fullName>Putative zinc finger LOL2</fullName>
    </alternativeName>
</protein>
<comment type="function">
    <text evidence="1">Putative zinc finger that may be involved in programmed cell death and defense response.</text>
</comment>
<comment type="interaction">
    <interactant intactId="EBI-15192119">
        <id>O65426</id>
    </interactant>
    <interactant intactId="EBI-4427947">
        <id>Q9LJG8</id>
        <label>ASIL2</label>
    </interactant>
    <organismsDiffer>false</organismsDiffer>
    <experiments>3</experiments>
</comment>
<comment type="subcellular location">
    <subcellularLocation>
        <location evidence="3">Nucleus</location>
    </subcellularLocation>
</comment>
<proteinExistence type="evidence at protein level"/>
<dbReference type="EMBL" id="AL022603">
    <property type="protein sequence ID" value="CAA18725.1"/>
    <property type="molecule type" value="Genomic_DNA"/>
</dbReference>
<dbReference type="EMBL" id="AL035527">
    <property type="protein sequence ID" value="CAB36805.1"/>
    <property type="molecule type" value="Genomic_DNA"/>
</dbReference>
<dbReference type="EMBL" id="AL161555">
    <property type="protein sequence ID" value="CAB81268.1"/>
    <property type="molecule type" value="Genomic_DNA"/>
</dbReference>
<dbReference type="EMBL" id="CP002687">
    <property type="protein sequence ID" value="AEE84480.1"/>
    <property type="molecule type" value="Genomic_DNA"/>
</dbReference>
<dbReference type="EMBL" id="BT011760">
    <property type="protein sequence ID" value="AAS65931.1"/>
    <property type="molecule type" value="mRNA"/>
</dbReference>
<dbReference type="EMBL" id="BT012384">
    <property type="protein sequence ID" value="AAS88774.1"/>
    <property type="molecule type" value="mRNA"/>
</dbReference>
<dbReference type="PIR" id="T05169">
    <property type="entry name" value="T05169"/>
</dbReference>
<dbReference type="RefSeq" id="NP_193892.1">
    <property type="nucleotide sequence ID" value="NM_118281.4"/>
</dbReference>
<dbReference type="SMR" id="O65426"/>
<dbReference type="BioGRID" id="13537">
    <property type="interactions" value="9"/>
</dbReference>
<dbReference type="FunCoup" id="O65426">
    <property type="interactions" value="61"/>
</dbReference>
<dbReference type="IntAct" id="O65426">
    <property type="interactions" value="10"/>
</dbReference>
<dbReference type="STRING" id="3702.O65426"/>
<dbReference type="iPTMnet" id="O65426"/>
<dbReference type="PaxDb" id="3702-AT4G21610.1"/>
<dbReference type="ProteomicsDB" id="238584"/>
<dbReference type="EnsemblPlants" id="AT4G21610.1">
    <property type="protein sequence ID" value="AT4G21610.1"/>
    <property type="gene ID" value="AT4G21610"/>
</dbReference>
<dbReference type="GeneID" id="828248"/>
<dbReference type="Gramene" id="AT4G21610.1">
    <property type="protein sequence ID" value="AT4G21610.1"/>
    <property type="gene ID" value="AT4G21610"/>
</dbReference>
<dbReference type="KEGG" id="ath:AT4G21610"/>
<dbReference type="Araport" id="AT4G21610"/>
<dbReference type="TAIR" id="AT4G21610">
    <property type="gene designation" value="LOL2"/>
</dbReference>
<dbReference type="eggNOG" id="ENOG502S2GF">
    <property type="taxonomic scope" value="Eukaryota"/>
</dbReference>
<dbReference type="HOGENOM" id="CLU_109544_0_0_1"/>
<dbReference type="InParanoid" id="O65426"/>
<dbReference type="OMA" id="CQTVNIV"/>
<dbReference type="OrthoDB" id="509329at2759"/>
<dbReference type="PhylomeDB" id="O65426"/>
<dbReference type="PRO" id="PR:O65426"/>
<dbReference type="Proteomes" id="UP000006548">
    <property type="component" value="Chromosome 4"/>
</dbReference>
<dbReference type="ExpressionAtlas" id="O65426">
    <property type="expression patterns" value="baseline and differential"/>
</dbReference>
<dbReference type="GO" id="GO:0005634">
    <property type="term" value="C:nucleus"/>
    <property type="evidence" value="ECO:0007669"/>
    <property type="project" value="UniProtKB-SubCell"/>
</dbReference>
<dbReference type="GO" id="GO:0009617">
    <property type="term" value="P:response to bacterium"/>
    <property type="evidence" value="ECO:0000270"/>
    <property type="project" value="TAIR"/>
</dbReference>
<dbReference type="InterPro" id="IPR040319">
    <property type="entry name" value="LSD1-like"/>
</dbReference>
<dbReference type="InterPro" id="IPR005735">
    <property type="entry name" value="Znf_LSD1"/>
</dbReference>
<dbReference type="NCBIfam" id="TIGR01053">
    <property type="entry name" value="LSD1"/>
    <property type="match status" value="2"/>
</dbReference>
<dbReference type="PANTHER" id="PTHR31747:SF17">
    <property type="entry name" value="PROTEIN LOL2"/>
    <property type="match status" value="1"/>
</dbReference>
<dbReference type="PANTHER" id="PTHR31747">
    <property type="entry name" value="PROTEIN LSD1"/>
    <property type="match status" value="1"/>
</dbReference>
<dbReference type="Pfam" id="PF06943">
    <property type="entry name" value="zf-LSD1"/>
    <property type="match status" value="2"/>
</dbReference>
<accession>O65426</accession>
<name>LOL2_ARATH</name>
<evidence type="ECO:0000250" key="1"/>
<evidence type="ECO:0000256" key="2">
    <source>
        <dbReference type="SAM" id="MobiDB-lite"/>
    </source>
</evidence>
<evidence type="ECO:0000305" key="3"/>
<evidence type="ECO:0007744" key="4">
    <source>
    </source>
</evidence>
<organism>
    <name type="scientific">Arabidopsis thaliana</name>
    <name type="common">Mouse-ear cress</name>
    <dbReference type="NCBI Taxonomy" id="3702"/>
    <lineage>
        <taxon>Eukaryota</taxon>
        <taxon>Viridiplantae</taxon>
        <taxon>Streptophyta</taxon>
        <taxon>Embryophyta</taxon>
        <taxon>Tracheophyta</taxon>
        <taxon>Spermatophyta</taxon>
        <taxon>Magnoliopsida</taxon>
        <taxon>eudicotyledons</taxon>
        <taxon>Gunneridae</taxon>
        <taxon>Pentapetalae</taxon>
        <taxon>rosids</taxon>
        <taxon>malvids</taxon>
        <taxon>Brassicales</taxon>
        <taxon>Brassicaceae</taxon>
        <taxon>Camelineae</taxon>
        <taxon>Arabidopsis</taxon>
    </lineage>
</organism>
<reference key="1">
    <citation type="journal article" date="1999" name="Nature">
        <title>Sequence and analysis of chromosome 4 of the plant Arabidopsis thaliana.</title>
        <authorList>
            <person name="Mayer K.F.X."/>
            <person name="Schueller C."/>
            <person name="Wambutt R."/>
            <person name="Murphy G."/>
            <person name="Volckaert G."/>
            <person name="Pohl T."/>
            <person name="Duesterhoeft A."/>
            <person name="Stiekema W."/>
            <person name="Entian K.-D."/>
            <person name="Terryn N."/>
            <person name="Harris B."/>
            <person name="Ansorge W."/>
            <person name="Brandt P."/>
            <person name="Grivell L.A."/>
            <person name="Rieger M."/>
            <person name="Weichselgartner M."/>
            <person name="de Simone V."/>
            <person name="Obermaier B."/>
            <person name="Mache R."/>
            <person name="Mueller M."/>
            <person name="Kreis M."/>
            <person name="Delseny M."/>
            <person name="Puigdomenech P."/>
            <person name="Watson M."/>
            <person name="Schmidtheini T."/>
            <person name="Reichert B."/>
            <person name="Portetelle D."/>
            <person name="Perez-Alonso M."/>
            <person name="Boutry M."/>
            <person name="Bancroft I."/>
            <person name="Vos P."/>
            <person name="Hoheisel J."/>
            <person name="Zimmermann W."/>
            <person name="Wedler H."/>
            <person name="Ridley P."/>
            <person name="Langham S.-A."/>
            <person name="McCullagh B."/>
            <person name="Bilham L."/>
            <person name="Robben J."/>
            <person name="van der Schueren J."/>
            <person name="Grymonprez B."/>
            <person name="Chuang Y.-J."/>
            <person name="Vandenbussche F."/>
            <person name="Braeken M."/>
            <person name="Weltjens I."/>
            <person name="Voet M."/>
            <person name="Bastiaens I."/>
            <person name="Aert R."/>
            <person name="Defoor E."/>
            <person name="Weitzenegger T."/>
            <person name="Bothe G."/>
            <person name="Ramsperger U."/>
            <person name="Hilbert H."/>
            <person name="Braun M."/>
            <person name="Holzer E."/>
            <person name="Brandt A."/>
            <person name="Peters S."/>
            <person name="van Staveren M."/>
            <person name="Dirkse W."/>
            <person name="Mooijman P."/>
            <person name="Klein Lankhorst R."/>
            <person name="Rose M."/>
            <person name="Hauf J."/>
            <person name="Koetter P."/>
            <person name="Berneiser S."/>
            <person name="Hempel S."/>
            <person name="Feldpausch M."/>
            <person name="Lamberth S."/>
            <person name="Van den Daele H."/>
            <person name="De Keyser A."/>
            <person name="Buysshaert C."/>
            <person name="Gielen J."/>
            <person name="Villarroel R."/>
            <person name="De Clercq R."/>
            <person name="van Montagu M."/>
            <person name="Rogers J."/>
            <person name="Cronin A."/>
            <person name="Quail M.A."/>
            <person name="Bray-Allen S."/>
            <person name="Clark L."/>
            <person name="Doggett J."/>
            <person name="Hall S."/>
            <person name="Kay M."/>
            <person name="Lennard N."/>
            <person name="McLay K."/>
            <person name="Mayes R."/>
            <person name="Pettett A."/>
            <person name="Rajandream M.A."/>
            <person name="Lyne M."/>
            <person name="Benes V."/>
            <person name="Rechmann S."/>
            <person name="Borkova D."/>
            <person name="Bloecker H."/>
            <person name="Scharfe M."/>
            <person name="Grimm M."/>
            <person name="Loehnert T.-H."/>
            <person name="Dose S."/>
            <person name="de Haan M."/>
            <person name="Maarse A.C."/>
            <person name="Schaefer M."/>
            <person name="Mueller-Auer S."/>
            <person name="Gabel C."/>
            <person name="Fuchs M."/>
            <person name="Fartmann B."/>
            <person name="Granderath K."/>
            <person name="Dauner D."/>
            <person name="Herzl A."/>
            <person name="Neumann S."/>
            <person name="Argiriou A."/>
            <person name="Vitale D."/>
            <person name="Liguori R."/>
            <person name="Piravandi E."/>
            <person name="Massenet O."/>
            <person name="Quigley F."/>
            <person name="Clabauld G."/>
            <person name="Muendlein A."/>
            <person name="Felber R."/>
            <person name="Schnabl S."/>
            <person name="Hiller R."/>
            <person name="Schmidt W."/>
            <person name="Lecharny A."/>
            <person name="Aubourg S."/>
            <person name="Chefdor F."/>
            <person name="Cooke R."/>
            <person name="Berger C."/>
            <person name="Monfort A."/>
            <person name="Casacuberta E."/>
            <person name="Gibbons T."/>
            <person name="Weber N."/>
            <person name="Vandenbol M."/>
            <person name="Bargues M."/>
            <person name="Terol J."/>
            <person name="Torres A."/>
            <person name="Perez-Perez A."/>
            <person name="Purnelle B."/>
            <person name="Bent E."/>
            <person name="Johnson S."/>
            <person name="Tacon D."/>
            <person name="Jesse T."/>
            <person name="Heijnen L."/>
            <person name="Schwarz S."/>
            <person name="Scholler P."/>
            <person name="Heber S."/>
            <person name="Francs P."/>
            <person name="Bielke C."/>
            <person name="Frishman D."/>
            <person name="Haase D."/>
            <person name="Lemcke K."/>
            <person name="Mewes H.-W."/>
            <person name="Stocker S."/>
            <person name="Zaccaria P."/>
            <person name="Bevan M."/>
            <person name="Wilson R.K."/>
            <person name="de la Bastide M."/>
            <person name="Habermann K."/>
            <person name="Parnell L."/>
            <person name="Dedhia N."/>
            <person name="Gnoj L."/>
            <person name="Schutz K."/>
            <person name="Huang E."/>
            <person name="Spiegel L."/>
            <person name="Sekhon M."/>
            <person name="Murray J."/>
            <person name="Sheet P."/>
            <person name="Cordes M."/>
            <person name="Abu-Threideh J."/>
            <person name="Stoneking T."/>
            <person name="Kalicki J."/>
            <person name="Graves T."/>
            <person name="Harmon G."/>
            <person name="Edwards J."/>
            <person name="Latreille P."/>
            <person name="Courtney L."/>
            <person name="Cloud J."/>
            <person name="Abbott A."/>
            <person name="Scott K."/>
            <person name="Johnson D."/>
            <person name="Minx P."/>
            <person name="Bentley D."/>
            <person name="Fulton B."/>
            <person name="Miller N."/>
            <person name="Greco T."/>
            <person name="Kemp K."/>
            <person name="Kramer J."/>
            <person name="Fulton L."/>
            <person name="Mardis E."/>
            <person name="Dante M."/>
            <person name="Pepin K."/>
            <person name="Hillier L.W."/>
            <person name="Nelson J."/>
            <person name="Spieth J."/>
            <person name="Ryan E."/>
            <person name="Andrews S."/>
            <person name="Geisel C."/>
            <person name="Layman D."/>
            <person name="Du H."/>
            <person name="Ali J."/>
            <person name="Berghoff A."/>
            <person name="Jones K."/>
            <person name="Drone K."/>
            <person name="Cotton M."/>
            <person name="Joshu C."/>
            <person name="Antonoiu B."/>
            <person name="Zidanic M."/>
            <person name="Strong C."/>
            <person name="Sun H."/>
            <person name="Lamar B."/>
            <person name="Yordan C."/>
            <person name="Ma P."/>
            <person name="Zhong J."/>
            <person name="Preston R."/>
            <person name="Vil D."/>
            <person name="Shekher M."/>
            <person name="Matero A."/>
            <person name="Shah R."/>
            <person name="Swaby I.K."/>
            <person name="O'Shaughnessy A."/>
            <person name="Rodriguez M."/>
            <person name="Hoffman J."/>
            <person name="Till S."/>
            <person name="Granat S."/>
            <person name="Shohdy N."/>
            <person name="Hasegawa A."/>
            <person name="Hameed A."/>
            <person name="Lodhi M."/>
            <person name="Johnson A."/>
            <person name="Chen E."/>
            <person name="Marra M.A."/>
            <person name="Martienssen R."/>
            <person name="McCombie W.R."/>
        </authorList>
    </citation>
    <scope>NUCLEOTIDE SEQUENCE [LARGE SCALE GENOMIC DNA]</scope>
    <source>
        <strain>cv. Columbia</strain>
    </source>
</reference>
<reference key="2">
    <citation type="journal article" date="2017" name="Plant J.">
        <title>Araport11: a complete reannotation of the Arabidopsis thaliana reference genome.</title>
        <authorList>
            <person name="Cheng C.Y."/>
            <person name="Krishnakumar V."/>
            <person name="Chan A.P."/>
            <person name="Thibaud-Nissen F."/>
            <person name="Schobel S."/>
            <person name="Town C.D."/>
        </authorList>
    </citation>
    <scope>GENOME REANNOTATION</scope>
    <source>
        <strain>cv. Columbia</strain>
    </source>
</reference>
<reference key="3">
    <citation type="submission" date="2004-03" db="EMBL/GenBank/DDBJ databases">
        <title>Arabidopsis cDNA clones.</title>
        <authorList>
            <person name="Shinn P."/>
            <person name="Chen H."/>
            <person name="Cheuk R.F."/>
            <person name="Kim C.J."/>
            <person name="Ecker J.R."/>
        </authorList>
    </citation>
    <scope>NUCLEOTIDE SEQUENCE [LARGE SCALE MRNA]</scope>
    <source>
        <strain>cv. Columbia</strain>
    </source>
</reference>
<reference key="4">
    <citation type="submission" date="2004-04" db="EMBL/GenBank/DDBJ databases">
        <title>Arabidopsis ORF clones.</title>
        <authorList>
            <person name="Shinn P."/>
            <person name="Chen H."/>
            <person name="Cheuk R.F."/>
            <person name="Kim C.J."/>
            <person name="Ecker J.R."/>
        </authorList>
    </citation>
    <scope>NUCLEOTIDE SEQUENCE [LARGE SCALE MRNA]</scope>
    <source>
        <strain>cv. Columbia</strain>
    </source>
</reference>
<reference key="5">
    <citation type="journal article" date="2012" name="Mol. Cell. Proteomics">
        <title>Comparative large-scale characterisation of plant vs. mammal proteins reveals similar and idiosyncratic N-alpha acetylation features.</title>
        <authorList>
            <person name="Bienvenut W.V."/>
            <person name="Sumpton D."/>
            <person name="Martinez A."/>
            <person name="Lilla S."/>
            <person name="Espagne C."/>
            <person name="Meinnel T."/>
            <person name="Giglione C."/>
        </authorList>
    </citation>
    <scope>ACETYLATION [LARGE SCALE ANALYSIS] AT MET-1</scope>
    <scope>IDENTIFICATION BY MASS SPECTROMETRY [LARGE SCALE ANALYSIS]</scope>
</reference>
<sequence length="155" mass="17248">MEEIQQQTQKEEQKHREEEEEEEEGPPPGWESAVLPPPIVTITAAVNPNPTTVEIPEKAQMVCGSCRRLLSYLRGSKHVKCSSCQTVNLVLEANQVGQVNCNNCKLLLMYPYGAPAVRCSSCNSVTDISENNKRPPWSEQQGPLKSLSSLRRAEN</sequence>